<keyword id="KW-0961">Cell wall biogenesis/degradation</keyword>
<keyword id="KW-0548">Nucleotidyltransferase</keyword>
<keyword id="KW-0777">Teichoic acid biosynthesis</keyword>
<keyword id="KW-0808">Transferase</keyword>
<organism>
    <name type="scientific">Streptococcus pneumoniae (strain ATCC 700669 / Spain 23F-1)</name>
    <dbReference type="NCBI Taxonomy" id="561276"/>
    <lineage>
        <taxon>Bacteria</taxon>
        <taxon>Bacillati</taxon>
        <taxon>Bacillota</taxon>
        <taxon>Bacilli</taxon>
        <taxon>Lactobacillales</taxon>
        <taxon>Streptococcaceae</taxon>
        <taxon>Streptococcus</taxon>
    </lineage>
</organism>
<feature type="chain" id="PRO_1000191072" description="Ribitol-5-phosphate cytidylyltransferase">
    <location>
        <begin position="1"/>
        <end position="235"/>
    </location>
</feature>
<feature type="binding site" evidence="1">
    <location>
        <begin position="7"/>
        <end position="10"/>
    </location>
    <ligand>
        <name>CTP</name>
        <dbReference type="ChEBI" id="CHEBI:37563"/>
    </ligand>
</feature>
<feature type="binding site" evidence="1">
    <location>
        <begin position="82"/>
        <end position="88"/>
    </location>
    <ligand>
        <name>CTP</name>
        <dbReference type="ChEBI" id="CHEBI:37563"/>
    </ligand>
</feature>
<feature type="binding site" evidence="1">
    <location>
        <position position="113"/>
    </location>
    <ligand>
        <name>CTP</name>
        <dbReference type="ChEBI" id="CHEBI:37563"/>
    </ligand>
</feature>
<feature type="site" description="Transition state stabilizer" evidence="1">
    <location>
        <position position="14"/>
    </location>
</feature>
<feature type="site" description="Transition state stabilizer" evidence="1">
    <location>
        <position position="22"/>
    </location>
</feature>
<feature type="site" description="Positions ribitol 5-phosphate for the nucleophilic attack" evidence="1">
    <location>
        <position position="161"/>
    </location>
</feature>
<feature type="site" description="Positions ribitol 5-phosphate for the nucleophilic attack" evidence="1">
    <location>
        <position position="218"/>
    </location>
</feature>
<accession>B8ZJT5</accession>
<evidence type="ECO:0000255" key="1">
    <source>
        <dbReference type="HAMAP-Rule" id="MF_02068"/>
    </source>
</evidence>
<reference key="1">
    <citation type="journal article" date="2009" name="J. Bacteriol.">
        <title>Role of conjugative elements in the evolution of the multidrug-resistant pandemic clone Streptococcus pneumoniae Spain23F ST81.</title>
        <authorList>
            <person name="Croucher N.J."/>
            <person name="Walker D."/>
            <person name="Romero P."/>
            <person name="Lennard N."/>
            <person name="Paterson G.K."/>
            <person name="Bason N.C."/>
            <person name="Mitchell A.M."/>
            <person name="Quail M.A."/>
            <person name="Andrew P.W."/>
            <person name="Parkhill J."/>
            <person name="Bentley S.D."/>
            <person name="Mitchell T.J."/>
        </authorList>
    </citation>
    <scope>NUCLEOTIDE SEQUENCE [LARGE SCALE GENOMIC DNA]</scope>
    <source>
        <strain>ATCC 700669 / Spain 23F-1</strain>
    </source>
</reference>
<sequence length="235" mass="26255">MIYAGILAGGTGTRMGISNLPKQFLELGNRPILIHTIEKFVLEPSIEKIVVGVHGDWVSHAEDLVDKYLPLYKERIIITKGGADRNTSIKKIIEAIDAYRPLTPEDIVVTHDSVRPFITLRMIQDNIQLAQNHDAVDTVVEAVDTIVESTNGQFITDIPNRAHLYQGQTPQTFRCKDFMDLYGSLSDEEKEILTDACKIFVIKGKDVALAKGEYSNLKITTVTDLKIAKSMIEKD</sequence>
<name>TARI_STRPJ</name>
<gene>
    <name evidence="1" type="primary">tarI</name>
    <name type="ordered locus">SPN23F11650</name>
</gene>
<dbReference type="EC" id="2.7.7.40" evidence="1"/>
<dbReference type="EMBL" id="FM211187">
    <property type="protein sequence ID" value="CAR68971.1"/>
    <property type="molecule type" value="Genomic_DNA"/>
</dbReference>
<dbReference type="RefSeq" id="WP_000638527.1">
    <property type="nucleotide sequence ID" value="NC_011900.1"/>
</dbReference>
<dbReference type="SMR" id="B8ZJT5"/>
<dbReference type="KEGG" id="sne:SPN23F11650"/>
<dbReference type="HOGENOM" id="CLU_061281_2_3_9"/>
<dbReference type="UniPathway" id="UPA00790"/>
<dbReference type="GO" id="GO:0050518">
    <property type="term" value="F:2-C-methyl-D-erythritol 4-phosphate cytidylyltransferase activity"/>
    <property type="evidence" value="ECO:0007669"/>
    <property type="project" value="TreeGrafter"/>
</dbReference>
<dbReference type="GO" id="GO:0047349">
    <property type="term" value="F:D-ribitol-5-phosphate cytidylyltransferase activity"/>
    <property type="evidence" value="ECO:0007669"/>
    <property type="project" value="UniProtKB-UniRule"/>
</dbReference>
<dbReference type="GO" id="GO:0071555">
    <property type="term" value="P:cell wall organization"/>
    <property type="evidence" value="ECO:0007669"/>
    <property type="project" value="UniProtKB-KW"/>
</dbReference>
<dbReference type="GO" id="GO:0008299">
    <property type="term" value="P:isoprenoid biosynthetic process"/>
    <property type="evidence" value="ECO:0007669"/>
    <property type="project" value="InterPro"/>
</dbReference>
<dbReference type="GO" id="GO:1902012">
    <property type="term" value="P:poly(ribitol phosphate) teichoic acid biosynthetic process"/>
    <property type="evidence" value="ECO:0007669"/>
    <property type="project" value="UniProtKB-UniRule"/>
</dbReference>
<dbReference type="CDD" id="cd02516">
    <property type="entry name" value="CDP-ME_synthetase"/>
    <property type="match status" value="1"/>
</dbReference>
<dbReference type="FunFam" id="3.90.550.10:FF:000003">
    <property type="entry name" value="2-C-methyl-D-erythritol 4-phosphate cytidylyltransferase"/>
    <property type="match status" value="1"/>
</dbReference>
<dbReference type="Gene3D" id="3.90.550.10">
    <property type="entry name" value="Spore Coat Polysaccharide Biosynthesis Protein SpsA, Chain A"/>
    <property type="match status" value="1"/>
</dbReference>
<dbReference type="HAMAP" id="MF_02068">
    <property type="entry name" value="TarI"/>
    <property type="match status" value="1"/>
</dbReference>
<dbReference type="InterPro" id="IPR034683">
    <property type="entry name" value="IspD/TarI"/>
</dbReference>
<dbReference type="InterPro" id="IPR050088">
    <property type="entry name" value="IspD/TarI_cytidylyltransf_bact"/>
</dbReference>
<dbReference type="InterPro" id="IPR018294">
    <property type="entry name" value="ISPD_synthase_CS"/>
</dbReference>
<dbReference type="InterPro" id="IPR029044">
    <property type="entry name" value="Nucleotide-diphossugar_trans"/>
</dbReference>
<dbReference type="InterPro" id="IPR034709">
    <property type="entry name" value="TarI"/>
</dbReference>
<dbReference type="NCBIfam" id="NF001183">
    <property type="entry name" value="PRK00155.1-3"/>
    <property type="match status" value="1"/>
</dbReference>
<dbReference type="PANTHER" id="PTHR32125">
    <property type="entry name" value="2-C-METHYL-D-ERYTHRITOL 4-PHOSPHATE CYTIDYLYLTRANSFERASE, CHLOROPLASTIC"/>
    <property type="match status" value="1"/>
</dbReference>
<dbReference type="PANTHER" id="PTHR32125:SF8">
    <property type="entry name" value="RIBITOL-5-PHOSPHATE CYTIDYLYLTRANSFERASE"/>
    <property type="match status" value="1"/>
</dbReference>
<dbReference type="Pfam" id="PF01128">
    <property type="entry name" value="IspD"/>
    <property type="match status" value="1"/>
</dbReference>
<dbReference type="SUPFAM" id="SSF53448">
    <property type="entry name" value="Nucleotide-diphospho-sugar transferases"/>
    <property type="match status" value="1"/>
</dbReference>
<dbReference type="PROSITE" id="PS01295">
    <property type="entry name" value="ISPD"/>
    <property type="match status" value="1"/>
</dbReference>
<comment type="function">
    <text evidence="1">Catalyzes the transfer of the cytidylyl group of CTP to D-ribitol 5-phosphate.</text>
</comment>
<comment type="catalytic activity">
    <reaction evidence="1">
        <text>D-ribitol 5-phosphate + CTP + H(+) = CDP-L-ribitol + diphosphate</text>
        <dbReference type="Rhea" id="RHEA:12456"/>
        <dbReference type="ChEBI" id="CHEBI:15378"/>
        <dbReference type="ChEBI" id="CHEBI:33019"/>
        <dbReference type="ChEBI" id="CHEBI:37563"/>
        <dbReference type="ChEBI" id="CHEBI:57608"/>
        <dbReference type="ChEBI" id="CHEBI:57695"/>
        <dbReference type="EC" id="2.7.7.40"/>
    </reaction>
</comment>
<comment type="pathway">
    <text evidence="1">Cell wall biogenesis; poly(ribitol phosphate) teichoic acid biosynthesis.</text>
</comment>
<comment type="similarity">
    <text evidence="1">Belongs to the IspD/TarI cytidylyltransferase family. TarI subfamily.</text>
</comment>
<protein>
    <recommendedName>
        <fullName evidence="1">Ribitol-5-phosphate cytidylyltransferase</fullName>
        <ecNumber evidence="1">2.7.7.40</ecNumber>
    </recommendedName>
</protein>
<proteinExistence type="inferred from homology"/>